<sequence length="49" mass="5913">MRVNITLEHKESGERLYLTSKNKRNTPDRLQLKKYSPKLRKHVTFTEVK</sequence>
<feature type="chain" id="PRO_0000411512" description="Large ribosomal subunit protein bL33C">
    <location>
        <begin position="1"/>
        <end position="49"/>
    </location>
</feature>
<keyword id="KW-0687">Ribonucleoprotein</keyword>
<keyword id="KW-0689">Ribosomal protein</keyword>
<reference key="1">
    <citation type="journal article" date="2003" name="Genome Res.">
        <title>Genome sequence of an M3 strain of Streptococcus pyogenes reveals a large-scale genomic rearrangement in invasive strains and new insights into phage evolution.</title>
        <authorList>
            <person name="Nakagawa I."/>
            <person name="Kurokawa K."/>
            <person name="Yamashita A."/>
            <person name="Nakata M."/>
            <person name="Tomiyasu Y."/>
            <person name="Okahashi N."/>
            <person name="Kawabata S."/>
            <person name="Yamazaki K."/>
            <person name="Shiba T."/>
            <person name="Yasunaga T."/>
            <person name="Hayashi H."/>
            <person name="Hattori M."/>
            <person name="Hamada S."/>
        </authorList>
    </citation>
    <scope>NUCLEOTIDE SEQUENCE [LARGE SCALE GENOMIC DNA]</scope>
    <source>
        <strain>SSI-1</strain>
    </source>
</reference>
<organism>
    <name type="scientific">Streptococcus pyogenes serotype M3 (strain SSI-1)</name>
    <dbReference type="NCBI Taxonomy" id="193567"/>
    <lineage>
        <taxon>Bacteria</taxon>
        <taxon>Bacillati</taxon>
        <taxon>Bacillota</taxon>
        <taxon>Bacilli</taxon>
        <taxon>Lactobacillales</taxon>
        <taxon>Streptococcaceae</taxon>
        <taxon>Streptococcus</taxon>
    </lineage>
</organism>
<name>RL333_STRPQ</name>
<accession>P0DE45</accession>
<accession>P66236</accession>
<accession>Q99XK7</accession>
<dbReference type="EMBL" id="BA000034">
    <property type="protein sequence ID" value="BAC64910.1"/>
    <property type="molecule type" value="Genomic_DNA"/>
</dbReference>
<dbReference type="SMR" id="P0DE45"/>
<dbReference type="KEGG" id="sps:SPs1815"/>
<dbReference type="HOGENOM" id="CLU_190949_3_2_9"/>
<dbReference type="GO" id="GO:0005737">
    <property type="term" value="C:cytoplasm"/>
    <property type="evidence" value="ECO:0007669"/>
    <property type="project" value="UniProtKB-ARBA"/>
</dbReference>
<dbReference type="GO" id="GO:1990904">
    <property type="term" value="C:ribonucleoprotein complex"/>
    <property type="evidence" value="ECO:0007669"/>
    <property type="project" value="UniProtKB-KW"/>
</dbReference>
<dbReference type="GO" id="GO:0005840">
    <property type="term" value="C:ribosome"/>
    <property type="evidence" value="ECO:0007669"/>
    <property type="project" value="UniProtKB-KW"/>
</dbReference>
<dbReference type="GO" id="GO:0003735">
    <property type="term" value="F:structural constituent of ribosome"/>
    <property type="evidence" value="ECO:0007669"/>
    <property type="project" value="InterPro"/>
</dbReference>
<dbReference type="GO" id="GO:0006412">
    <property type="term" value="P:translation"/>
    <property type="evidence" value="ECO:0007669"/>
    <property type="project" value="UniProtKB-UniRule"/>
</dbReference>
<dbReference type="Gene3D" id="2.20.28.120">
    <property type="entry name" value="Ribosomal protein L33"/>
    <property type="match status" value="1"/>
</dbReference>
<dbReference type="HAMAP" id="MF_00294">
    <property type="entry name" value="Ribosomal_bL33"/>
    <property type="match status" value="1"/>
</dbReference>
<dbReference type="InterPro" id="IPR001705">
    <property type="entry name" value="Ribosomal_bL33"/>
</dbReference>
<dbReference type="InterPro" id="IPR018264">
    <property type="entry name" value="Ribosomal_bL33_CS"/>
</dbReference>
<dbReference type="InterPro" id="IPR038584">
    <property type="entry name" value="Ribosomal_bL33_sf"/>
</dbReference>
<dbReference type="InterPro" id="IPR011332">
    <property type="entry name" value="Ribosomal_zn-bd"/>
</dbReference>
<dbReference type="NCBIfam" id="NF001764">
    <property type="entry name" value="PRK00504.1"/>
    <property type="match status" value="1"/>
</dbReference>
<dbReference type="NCBIfam" id="NF001860">
    <property type="entry name" value="PRK00595.1"/>
    <property type="match status" value="1"/>
</dbReference>
<dbReference type="NCBIfam" id="TIGR01023">
    <property type="entry name" value="rpmG_bact"/>
    <property type="match status" value="1"/>
</dbReference>
<dbReference type="PANTHER" id="PTHR43168">
    <property type="entry name" value="50S RIBOSOMAL PROTEIN L33, CHLOROPLASTIC"/>
    <property type="match status" value="1"/>
</dbReference>
<dbReference type="PANTHER" id="PTHR43168:SF2">
    <property type="entry name" value="LARGE RIBOSOMAL SUBUNIT PROTEIN BL33C"/>
    <property type="match status" value="1"/>
</dbReference>
<dbReference type="Pfam" id="PF00471">
    <property type="entry name" value="Ribosomal_L33"/>
    <property type="match status" value="1"/>
</dbReference>
<dbReference type="SUPFAM" id="SSF57829">
    <property type="entry name" value="Zn-binding ribosomal proteins"/>
    <property type="match status" value="1"/>
</dbReference>
<dbReference type="PROSITE" id="PS00582">
    <property type="entry name" value="RIBOSOMAL_L33"/>
    <property type="match status" value="1"/>
</dbReference>
<evidence type="ECO:0000255" key="1">
    <source>
        <dbReference type="HAMAP-Rule" id="MF_00294"/>
    </source>
</evidence>
<proteinExistence type="inferred from homology"/>
<comment type="similarity">
    <text evidence="1">Belongs to the bacterial ribosomal protein bL33 family.</text>
</comment>
<gene>
    <name evidence="1" type="primary">rpmG3</name>
    <name type="ordered locus">SPs1815</name>
</gene>
<protein>
    <recommendedName>
        <fullName evidence="1">Large ribosomal subunit protein bL33C</fullName>
    </recommendedName>
    <alternativeName>
        <fullName evidence="1">50S ribosomal protein L33 3</fullName>
    </alternativeName>
</protein>